<protein>
    <recommendedName>
        <fullName evidence="1">Phosphatidylglycerol--prolipoprotein diacylglyceryl transferase</fullName>
        <ecNumber evidence="1">2.5.1.145</ecNumber>
    </recommendedName>
</protein>
<evidence type="ECO:0000255" key="1">
    <source>
        <dbReference type="HAMAP-Rule" id="MF_01147"/>
    </source>
</evidence>
<keyword id="KW-0997">Cell inner membrane</keyword>
<keyword id="KW-1003">Cell membrane</keyword>
<keyword id="KW-0472">Membrane</keyword>
<keyword id="KW-0808">Transferase</keyword>
<keyword id="KW-0812">Transmembrane</keyword>
<keyword id="KW-1133">Transmembrane helix</keyword>
<accession>B0BVZ1</accession>
<dbReference type="EC" id="2.5.1.145" evidence="1"/>
<dbReference type="EMBL" id="CP000766">
    <property type="protein sequence ID" value="ABY72017.1"/>
    <property type="molecule type" value="Genomic_DNA"/>
</dbReference>
<dbReference type="RefSeq" id="WP_012150302.1">
    <property type="nucleotide sequence ID" value="NC_010263.3"/>
</dbReference>
<dbReference type="SMR" id="B0BVZ1"/>
<dbReference type="GeneID" id="79936873"/>
<dbReference type="KEGG" id="rrj:RrIowa_0095"/>
<dbReference type="eggNOG" id="COG0682">
    <property type="taxonomic scope" value="Bacteria"/>
</dbReference>
<dbReference type="HOGENOM" id="CLU_013386_1_0_5"/>
<dbReference type="UniPathway" id="UPA00664"/>
<dbReference type="Proteomes" id="UP000000796">
    <property type="component" value="Chromosome"/>
</dbReference>
<dbReference type="GO" id="GO:0005886">
    <property type="term" value="C:plasma membrane"/>
    <property type="evidence" value="ECO:0007669"/>
    <property type="project" value="UniProtKB-SubCell"/>
</dbReference>
<dbReference type="GO" id="GO:0008961">
    <property type="term" value="F:phosphatidylglycerol-prolipoprotein diacylglyceryl transferase activity"/>
    <property type="evidence" value="ECO:0007669"/>
    <property type="project" value="UniProtKB-UniRule"/>
</dbReference>
<dbReference type="GO" id="GO:0042158">
    <property type="term" value="P:lipoprotein biosynthetic process"/>
    <property type="evidence" value="ECO:0007669"/>
    <property type="project" value="UniProtKB-UniRule"/>
</dbReference>
<dbReference type="HAMAP" id="MF_01147">
    <property type="entry name" value="Lgt"/>
    <property type="match status" value="1"/>
</dbReference>
<dbReference type="InterPro" id="IPR001640">
    <property type="entry name" value="Lgt"/>
</dbReference>
<dbReference type="NCBIfam" id="TIGR00544">
    <property type="entry name" value="lgt"/>
    <property type="match status" value="1"/>
</dbReference>
<dbReference type="PANTHER" id="PTHR30589:SF0">
    <property type="entry name" value="PHOSPHATIDYLGLYCEROL--PROLIPOPROTEIN DIACYLGLYCERYL TRANSFERASE"/>
    <property type="match status" value="1"/>
</dbReference>
<dbReference type="PANTHER" id="PTHR30589">
    <property type="entry name" value="PROLIPOPROTEIN DIACYLGLYCERYL TRANSFERASE"/>
    <property type="match status" value="1"/>
</dbReference>
<dbReference type="Pfam" id="PF01790">
    <property type="entry name" value="LGT"/>
    <property type="match status" value="1"/>
</dbReference>
<dbReference type="PROSITE" id="PS01311">
    <property type="entry name" value="LGT"/>
    <property type="match status" value="1"/>
</dbReference>
<reference key="1">
    <citation type="journal article" date="2008" name="Infect. Immun.">
        <title>Genomic comparison of virulent Rickettsia rickettsii Sheila Smith and avirulent Rickettsia rickettsii Iowa.</title>
        <authorList>
            <person name="Ellison D.W."/>
            <person name="Clark T.R."/>
            <person name="Sturdevant D.E."/>
            <person name="Virtaneva K."/>
            <person name="Porcella S.F."/>
            <person name="Hackstadt T."/>
        </authorList>
    </citation>
    <scope>NUCLEOTIDE SEQUENCE [LARGE SCALE GENOMIC DNA]</scope>
    <source>
        <strain>Iowa</strain>
    </source>
</reference>
<name>LGT_RICRO</name>
<proteinExistence type="inferred from homology"/>
<gene>
    <name evidence="1" type="primary">lgt</name>
    <name type="ordered locus">RrIowa_0095</name>
</gene>
<comment type="function">
    <text evidence="1">Catalyzes the transfer of the diacylglyceryl group from phosphatidylglycerol to the sulfhydryl group of the N-terminal cysteine of a prolipoprotein, the first step in the formation of mature lipoproteins.</text>
</comment>
<comment type="catalytic activity">
    <reaction evidence="1">
        <text>L-cysteinyl-[prolipoprotein] + a 1,2-diacyl-sn-glycero-3-phospho-(1'-sn-glycerol) = an S-1,2-diacyl-sn-glyceryl-L-cysteinyl-[prolipoprotein] + sn-glycerol 1-phosphate + H(+)</text>
        <dbReference type="Rhea" id="RHEA:56712"/>
        <dbReference type="Rhea" id="RHEA-COMP:14679"/>
        <dbReference type="Rhea" id="RHEA-COMP:14680"/>
        <dbReference type="ChEBI" id="CHEBI:15378"/>
        <dbReference type="ChEBI" id="CHEBI:29950"/>
        <dbReference type="ChEBI" id="CHEBI:57685"/>
        <dbReference type="ChEBI" id="CHEBI:64716"/>
        <dbReference type="ChEBI" id="CHEBI:140658"/>
        <dbReference type="EC" id="2.5.1.145"/>
    </reaction>
</comment>
<comment type="pathway">
    <text evidence="1">Protein modification; lipoprotein biosynthesis (diacylglyceryl transfer).</text>
</comment>
<comment type="subcellular location">
    <subcellularLocation>
        <location evidence="1">Cell inner membrane</location>
        <topology evidence="1">Multi-pass membrane protein</topology>
    </subcellularLocation>
</comment>
<comment type="similarity">
    <text evidence="1">Belongs to the Lgt family.</text>
</comment>
<organism>
    <name type="scientific">Rickettsia rickettsii (strain Iowa)</name>
    <dbReference type="NCBI Taxonomy" id="452659"/>
    <lineage>
        <taxon>Bacteria</taxon>
        <taxon>Pseudomonadati</taxon>
        <taxon>Pseudomonadota</taxon>
        <taxon>Alphaproteobacteria</taxon>
        <taxon>Rickettsiales</taxon>
        <taxon>Rickettsiaceae</taxon>
        <taxon>Rickettsieae</taxon>
        <taxon>Rickettsia</taxon>
        <taxon>spotted fever group</taxon>
    </lineage>
</organism>
<sequence length="259" mass="29070">MTFPNINPVIFSIGPLAISWYSLSYVIGILLGWFYANKIIEKFKPQITKKNLEDFITYAVIGIIVGGRLGFVLLYNPSRYFSNPIDILKTYEGGMSFHGGALGGIIAAYLFCRKYKINFLSLTDIIAPVVPIGLFLGRIANFINGELYGRITNASFGMIFPNSDLMPRHPSQLYEAFFEGLVLFSILAYATFKHKTLKKCGLNSGIFFTFYGLFRITIEIFREPDIQIGFILDSLTMGQILSVPMLLLGSYLICQSNPK</sequence>
<feature type="chain" id="PRO_1000085082" description="Phosphatidylglycerol--prolipoprotein diacylglyceryl transferase">
    <location>
        <begin position="1"/>
        <end position="259"/>
    </location>
</feature>
<feature type="transmembrane region" description="Helical" evidence="1">
    <location>
        <begin position="16"/>
        <end position="36"/>
    </location>
</feature>
<feature type="transmembrane region" description="Helical" evidence="1">
    <location>
        <begin position="55"/>
        <end position="75"/>
    </location>
</feature>
<feature type="transmembrane region" description="Helical" evidence="1">
    <location>
        <begin position="92"/>
        <end position="112"/>
    </location>
</feature>
<feature type="transmembrane region" description="Helical" evidence="1">
    <location>
        <begin position="117"/>
        <end position="137"/>
    </location>
</feature>
<feature type="transmembrane region" description="Helical" evidence="1">
    <location>
        <begin position="172"/>
        <end position="192"/>
    </location>
</feature>
<feature type="transmembrane region" description="Helical" evidence="1">
    <location>
        <begin position="201"/>
        <end position="221"/>
    </location>
</feature>
<feature type="transmembrane region" description="Helical" evidence="1">
    <location>
        <begin position="228"/>
        <end position="248"/>
    </location>
</feature>
<feature type="binding site" evidence="1">
    <location>
        <position position="138"/>
    </location>
    <ligand>
        <name>a 1,2-diacyl-sn-glycero-3-phospho-(1'-sn-glycerol)</name>
        <dbReference type="ChEBI" id="CHEBI:64716"/>
    </ligand>
</feature>